<accession>Q88VB7</accession>
<accession>F9UQ88</accession>
<evidence type="ECO:0000255" key="1">
    <source>
        <dbReference type="HAMAP-Rule" id="MF_01041"/>
    </source>
</evidence>
<protein>
    <recommendedName>
        <fullName evidence="1">UPF0223 protein lp_2149</fullName>
    </recommendedName>
</protein>
<name>Y2149_LACPL</name>
<gene>
    <name type="ordered locus">lp_2149</name>
</gene>
<reference key="1">
    <citation type="journal article" date="2003" name="Proc. Natl. Acad. Sci. U.S.A.">
        <title>Complete genome sequence of Lactobacillus plantarum WCFS1.</title>
        <authorList>
            <person name="Kleerebezem M."/>
            <person name="Boekhorst J."/>
            <person name="van Kranenburg R."/>
            <person name="Molenaar D."/>
            <person name="Kuipers O.P."/>
            <person name="Leer R."/>
            <person name="Tarchini R."/>
            <person name="Peters S.A."/>
            <person name="Sandbrink H.M."/>
            <person name="Fiers M.W.E.J."/>
            <person name="Stiekema W."/>
            <person name="Klein Lankhorst R.M."/>
            <person name="Bron P.A."/>
            <person name="Hoffer S.M."/>
            <person name="Nierop Groot M.N."/>
            <person name="Kerkhoven R."/>
            <person name="De Vries M."/>
            <person name="Ursing B."/>
            <person name="De Vos W.M."/>
            <person name="Siezen R.J."/>
        </authorList>
    </citation>
    <scope>NUCLEOTIDE SEQUENCE [LARGE SCALE GENOMIC DNA]</scope>
    <source>
        <strain>ATCC BAA-793 / NCIMB 8826 / WCFS1</strain>
    </source>
</reference>
<reference key="2">
    <citation type="journal article" date="2012" name="J. Bacteriol.">
        <title>Complete resequencing and reannotation of the Lactobacillus plantarum WCFS1 genome.</title>
        <authorList>
            <person name="Siezen R.J."/>
            <person name="Francke C."/>
            <person name="Renckens B."/>
            <person name="Boekhorst J."/>
            <person name="Wels M."/>
            <person name="Kleerebezem M."/>
            <person name="van Hijum S.A."/>
        </authorList>
    </citation>
    <scope>NUCLEOTIDE SEQUENCE [LARGE SCALE GENOMIC DNA]</scope>
    <scope>GENOME REANNOTATION</scope>
    <source>
        <strain>ATCC BAA-793 / NCIMB 8826 / WCFS1</strain>
    </source>
</reference>
<proteinExistence type="inferred from homology"/>
<comment type="similarity">
    <text evidence="1">Belongs to the UPF0223 family.</text>
</comment>
<dbReference type="EMBL" id="AL935263">
    <property type="protein sequence ID" value="CCC79377.1"/>
    <property type="molecule type" value="Genomic_DNA"/>
</dbReference>
<dbReference type="RefSeq" id="YP_004889891.1">
    <property type="nucleotide sequence ID" value="NC_004567.2"/>
</dbReference>
<dbReference type="SMR" id="Q88VB7"/>
<dbReference type="STRING" id="220668.lp_2149"/>
<dbReference type="EnsemblBacteria" id="CCC79377">
    <property type="protein sequence ID" value="CCC79377"/>
    <property type="gene ID" value="lp_2149"/>
</dbReference>
<dbReference type="KEGG" id="lpl:lp_2149"/>
<dbReference type="PATRIC" id="fig|220668.9.peg.1818"/>
<dbReference type="eggNOG" id="COG4476">
    <property type="taxonomic scope" value="Bacteria"/>
</dbReference>
<dbReference type="HOGENOM" id="CLU_166693_1_0_9"/>
<dbReference type="OrthoDB" id="1649074at2"/>
<dbReference type="PhylomeDB" id="Q88VB7"/>
<dbReference type="Proteomes" id="UP000000432">
    <property type="component" value="Chromosome"/>
</dbReference>
<dbReference type="Gene3D" id="1.10.220.80">
    <property type="entry name" value="BH2638-like"/>
    <property type="match status" value="1"/>
</dbReference>
<dbReference type="HAMAP" id="MF_01041">
    <property type="entry name" value="UPF0223"/>
    <property type="match status" value="1"/>
</dbReference>
<dbReference type="InterPro" id="IPR023324">
    <property type="entry name" value="BH2638-like_sf"/>
</dbReference>
<dbReference type="InterPro" id="IPR007920">
    <property type="entry name" value="UPF0223"/>
</dbReference>
<dbReference type="NCBIfam" id="NF003353">
    <property type="entry name" value="PRK04387.1"/>
    <property type="match status" value="1"/>
</dbReference>
<dbReference type="Pfam" id="PF05256">
    <property type="entry name" value="UPF0223"/>
    <property type="match status" value="1"/>
</dbReference>
<dbReference type="PIRSF" id="PIRSF037260">
    <property type="entry name" value="UPF0223"/>
    <property type="match status" value="1"/>
</dbReference>
<dbReference type="SUPFAM" id="SSF158504">
    <property type="entry name" value="BH2638-like"/>
    <property type="match status" value="1"/>
</dbReference>
<keyword id="KW-1185">Reference proteome</keyword>
<organism>
    <name type="scientific">Lactiplantibacillus plantarum (strain ATCC BAA-793 / NCIMB 8826 / WCFS1)</name>
    <name type="common">Lactobacillus plantarum</name>
    <dbReference type="NCBI Taxonomy" id="220668"/>
    <lineage>
        <taxon>Bacteria</taxon>
        <taxon>Bacillati</taxon>
        <taxon>Bacillota</taxon>
        <taxon>Bacilli</taxon>
        <taxon>Lactobacillales</taxon>
        <taxon>Lactobacillaceae</taxon>
        <taxon>Lactiplantibacillus</taxon>
    </lineage>
</organism>
<feature type="chain" id="PRO_0000216678" description="UPF0223 protein lp_2149">
    <location>
        <begin position="1"/>
        <end position="97"/>
    </location>
</feature>
<sequence length="97" mass="11323">MKMPKHNDNYQYPLDETWTTAEIIKVTTFYQAIEAANEGTIATADLLAAYRDFKTVVPAKSEEKRLARDYEAASGYRIYQTMRAAQETNKQRFQYRD</sequence>